<name>SUFE_ESCF3</name>
<evidence type="ECO:0000255" key="1">
    <source>
        <dbReference type="HAMAP-Rule" id="MF_01832"/>
    </source>
</evidence>
<protein>
    <recommendedName>
        <fullName evidence="1">Cysteine desulfuration protein SufE</fullName>
    </recommendedName>
</protein>
<keyword id="KW-0963">Cytoplasm</keyword>
<dbReference type="EMBL" id="CU928158">
    <property type="protein sequence ID" value="CAQ88894.1"/>
    <property type="molecule type" value="Genomic_DNA"/>
</dbReference>
<dbReference type="RefSeq" id="WP_000279739.1">
    <property type="nucleotide sequence ID" value="NC_011740.1"/>
</dbReference>
<dbReference type="SMR" id="B7LQ97"/>
<dbReference type="GeneID" id="75057584"/>
<dbReference type="KEGG" id="efe:EFER_1373"/>
<dbReference type="HOGENOM" id="CLU_124502_1_1_6"/>
<dbReference type="OrthoDB" id="9799320at2"/>
<dbReference type="UniPathway" id="UPA00266"/>
<dbReference type="Proteomes" id="UP000000745">
    <property type="component" value="Chromosome"/>
</dbReference>
<dbReference type="GO" id="GO:0005737">
    <property type="term" value="C:cytoplasm"/>
    <property type="evidence" value="ECO:0007669"/>
    <property type="project" value="UniProtKB-SubCell"/>
</dbReference>
<dbReference type="GO" id="GO:0016226">
    <property type="term" value="P:iron-sulfur cluster assembly"/>
    <property type="evidence" value="ECO:0007669"/>
    <property type="project" value="InterPro"/>
</dbReference>
<dbReference type="GO" id="GO:0006790">
    <property type="term" value="P:sulfur compound metabolic process"/>
    <property type="evidence" value="ECO:0007669"/>
    <property type="project" value="InterPro"/>
</dbReference>
<dbReference type="FunFam" id="3.90.1010.10:FF:000004">
    <property type="entry name" value="Cysteine desulfuration protein SufE"/>
    <property type="match status" value="1"/>
</dbReference>
<dbReference type="Gene3D" id="3.90.1010.10">
    <property type="match status" value="1"/>
</dbReference>
<dbReference type="HAMAP" id="MF_01832">
    <property type="entry name" value="SufE"/>
    <property type="match status" value="1"/>
</dbReference>
<dbReference type="InterPro" id="IPR023939">
    <property type="entry name" value="Cysteine_desulfuration_SufE"/>
</dbReference>
<dbReference type="InterPro" id="IPR003808">
    <property type="entry name" value="Fe-S_metab-assoc_dom"/>
</dbReference>
<dbReference type="NCBIfam" id="NF006792">
    <property type="entry name" value="PRK09296.1"/>
    <property type="match status" value="1"/>
</dbReference>
<dbReference type="PANTHER" id="PTHR43597:SF3">
    <property type="entry name" value="CYSTEINE DESULFURATION PROTEIN SUFE"/>
    <property type="match status" value="1"/>
</dbReference>
<dbReference type="PANTHER" id="PTHR43597">
    <property type="entry name" value="SULFUR ACCEPTOR PROTEIN CSDE"/>
    <property type="match status" value="1"/>
</dbReference>
<dbReference type="Pfam" id="PF02657">
    <property type="entry name" value="SufE"/>
    <property type="match status" value="1"/>
</dbReference>
<dbReference type="SUPFAM" id="SSF82649">
    <property type="entry name" value="SufE/NifU"/>
    <property type="match status" value="1"/>
</dbReference>
<sequence>MAVLPDKEKLLRNFLRCANWEEKYLYIIELGQRMPELHDEDKSPQNSVQGCQSQVWIVMRQNAQGIIELQGDSDAAIVKGLIAVVFILYDQMTPQDIVNFDVRPWFEKMALTQHLTPSRSQGLEAMIRAIRAKAAALS</sequence>
<proteinExistence type="inferred from homology"/>
<accession>B7LQ97</accession>
<feature type="chain" id="PRO_1000188328" description="Cysteine desulfuration protein SufE">
    <location>
        <begin position="1"/>
        <end position="138"/>
    </location>
</feature>
<feature type="active site" description="Cysteine persulfide intermediate" evidence="1">
    <location>
        <position position="51"/>
    </location>
</feature>
<reference key="1">
    <citation type="journal article" date="2009" name="PLoS Genet.">
        <title>Organised genome dynamics in the Escherichia coli species results in highly diverse adaptive paths.</title>
        <authorList>
            <person name="Touchon M."/>
            <person name="Hoede C."/>
            <person name="Tenaillon O."/>
            <person name="Barbe V."/>
            <person name="Baeriswyl S."/>
            <person name="Bidet P."/>
            <person name="Bingen E."/>
            <person name="Bonacorsi S."/>
            <person name="Bouchier C."/>
            <person name="Bouvet O."/>
            <person name="Calteau A."/>
            <person name="Chiapello H."/>
            <person name="Clermont O."/>
            <person name="Cruveiller S."/>
            <person name="Danchin A."/>
            <person name="Diard M."/>
            <person name="Dossat C."/>
            <person name="Karoui M.E."/>
            <person name="Frapy E."/>
            <person name="Garry L."/>
            <person name="Ghigo J.M."/>
            <person name="Gilles A.M."/>
            <person name="Johnson J."/>
            <person name="Le Bouguenec C."/>
            <person name="Lescat M."/>
            <person name="Mangenot S."/>
            <person name="Martinez-Jehanne V."/>
            <person name="Matic I."/>
            <person name="Nassif X."/>
            <person name="Oztas S."/>
            <person name="Petit M.A."/>
            <person name="Pichon C."/>
            <person name="Rouy Z."/>
            <person name="Ruf C.S."/>
            <person name="Schneider D."/>
            <person name="Tourret J."/>
            <person name="Vacherie B."/>
            <person name="Vallenet D."/>
            <person name="Medigue C."/>
            <person name="Rocha E.P.C."/>
            <person name="Denamur E."/>
        </authorList>
    </citation>
    <scope>NUCLEOTIDE SEQUENCE [LARGE SCALE GENOMIC DNA]</scope>
    <source>
        <strain>ATCC 35469 / DSM 13698 / BCRC 15582 / CCUG 18766 / IAM 14443 / JCM 21226 / LMG 7866 / NBRC 102419 / NCTC 12128 / CDC 0568-73</strain>
    </source>
</reference>
<organism>
    <name type="scientific">Escherichia fergusonii (strain ATCC 35469 / DSM 13698 / CCUG 18766 / IAM 14443 / JCM 21226 / LMG 7866 / NBRC 102419 / NCTC 12128 / CDC 0568-73)</name>
    <dbReference type="NCBI Taxonomy" id="585054"/>
    <lineage>
        <taxon>Bacteria</taxon>
        <taxon>Pseudomonadati</taxon>
        <taxon>Pseudomonadota</taxon>
        <taxon>Gammaproteobacteria</taxon>
        <taxon>Enterobacterales</taxon>
        <taxon>Enterobacteriaceae</taxon>
        <taxon>Escherichia</taxon>
    </lineage>
</organism>
<gene>
    <name evidence="1" type="primary">sufE</name>
    <name type="ordered locus">EFER_1373</name>
</gene>
<comment type="function">
    <text evidence="1">Participates in cysteine desulfuration mediated by SufS. Cysteine desulfuration mobilizes sulfur from L-cysteine to yield L-alanine and constitutes an essential step in sulfur metabolism for biosynthesis of a variety of sulfur-containing biomolecules. Functions as a sulfur acceptor for SufS, by mediating the direct transfer of the sulfur atom from the S-sulfanylcysteine of SufS, an intermediate product of cysteine desulfuration process.</text>
</comment>
<comment type="pathway">
    <text evidence="1">Cofactor biosynthesis; iron-sulfur cluster biosynthesis.</text>
</comment>
<comment type="subunit">
    <text evidence="1">Homodimer. Interacts with SufS.</text>
</comment>
<comment type="subcellular location">
    <subcellularLocation>
        <location evidence="1">Cytoplasm</location>
    </subcellularLocation>
</comment>
<comment type="similarity">
    <text evidence="1">Belongs to the SufE family.</text>
</comment>